<keyword id="KW-0067">ATP-binding</keyword>
<keyword id="KW-0143">Chaperone</keyword>
<keyword id="KW-0479">Metal-binding</keyword>
<keyword id="KW-0547">Nucleotide-binding</keyword>
<keyword id="KW-1185">Reference proteome</keyword>
<keyword id="KW-0862">Zinc</keyword>
<protein>
    <recommendedName>
        <fullName evidence="1">ATP-dependent Clp protease ATP-binding subunit ClpX</fullName>
    </recommendedName>
</protein>
<sequence length="424" mass="46025">MTKLTGGDSKSTLYCSFCGKSQHEVRKLIAGPTVFICDECVELCNDIIREETKGALVSKKDGGVPTPHEICEHLDQYVIGQAKAKRVLSVAVHNHYKRLNHGAKGADVELAKSNILLVGPTGSGKTLLAQTMARLLDVPFTMADATTLTEAGYVGEDVENIILKLLQASDYNVERAQRGIVYIDEIDKISRKADNPSITRDVSGEGVQQALLKLMEGTTASVPPQGGRKHPQQEFLQVDTTNILFICGGAFAGLEKIIGDRLQGKSIGFGAYVAAPEERRTGETLQQCEPEDLLKFGLIPEFVGRLPVIATLMDLDEAALVEILTAPKNALVKQYQKLFDMEGVKLGFTDDALVAIARKAITRKTGARGLRSILEGLLLDTMFDLPSMDGVDEIMVDKDVVEGRKDPVRVFTKKNKEKAGGDAA</sequence>
<comment type="function">
    <text evidence="1">ATP-dependent specificity component of the Clp protease. It directs the protease to specific substrates. Can perform chaperone functions in the absence of ClpP.</text>
</comment>
<comment type="subunit">
    <text evidence="1">Component of the ClpX-ClpP complex. Forms a hexameric ring that, in the presence of ATP, binds to fourteen ClpP subunits assembled into a disk-like structure with a central cavity, resembling the structure of eukaryotic proteasomes.</text>
</comment>
<comment type="similarity">
    <text evidence="1">Belongs to the ClpX chaperone family.</text>
</comment>
<name>CLPX_RHIWR</name>
<dbReference type="EMBL" id="CP000699">
    <property type="protein sequence ID" value="ABQ66960.1"/>
    <property type="molecule type" value="Genomic_DNA"/>
</dbReference>
<dbReference type="SMR" id="A5V3U4"/>
<dbReference type="STRING" id="392499.Swit_0592"/>
<dbReference type="PaxDb" id="392499-Swit_0592"/>
<dbReference type="KEGG" id="swi:Swit_0592"/>
<dbReference type="eggNOG" id="COG1219">
    <property type="taxonomic scope" value="Bacteria"/>
</dbReference>
<dbReference type="HOGENOM" id="CLU_014218_8_2_5"/>
<dbReference type="OrthoDB" id="9804062at2"/>
<dbReference type="Proteomes" id="UP000001989">
    <property type="component" value="Chromosome"/>
</dbReference>
<dbReference type="GO" id="GO:0009376">
    <property type="term" value="C:HslUV protease complex"/>
    <property type="evidence" value="ECO:0007669"/>
    <property type="project" value="TreeGrafter"/>
</dbReference>
<dbReference type="GO" id="GO:0005524">
    <property type="term" value="F:ATP binding"/>
    <property type="evidence" value="ECO:0007669"/>
    <property type="project" value="UniProtKB-UniRule"/>
</dbReference>
<dbReference type="GO" id="GO:0016887">
    <property type="term" value="F:ATP hydrolysis activity"/>
    <property type="evidence" value="ECO:0007669"/>
    <property type="project" value="InterPro"/>
</dbReference>
<dbReference type="GO" id="GO:0140662">
    <property type="term" value="F:ATP-dependent protein folding chaperone"/>
    <property type="evidence" value="ECO:0007669"/>
    <property type="project" value="InterPro"/>
</dbReference>
<dbReference type="GO" id="GO:0046983">
    <property type="term" value="F:protein dimerization activity"/>
    <property type="evidence" value="ECO:0007669"/>
    <property type="project" value="InterPro"/>
</dbReference>
<dbReference type="GO" id="GO:0051082">
    <property type="term" value="F:unfolded protein binding"/>
    <property type="evidence" value="ECO:0007669"/>
    <property type="project" value="UniProtKB-UniRule"/>
</dbReference>
<dbReference type="GO" id="GO:0008270">
    <property type="term" value="F:zinc ion binding"/>
    <property type="evidence" value="ECO:0007669"/>
    <property type="project" value="InterPro"/>
</dbReference>
<dbReference type="GO" id="GO:0051301">
    <property type="term" value="P:cell division"/>
    <property type="evidence" value="ECO:0007669"/>
    <property type="project" value="TreeGrafter"/>
</dbReference>
<dbReference type="GO" id="GO:0051603">
    <property type="term" value="P:proteolysis involved in protein catabolic process"/>
    <property type="evidence" value="ECO:0007669"/>
    <property type="project" value="TreeGrafter"/>
</dbReference>
<dbReference type="CDD" id="cd19497">
    <property type="entry name" value="RecA-like_ClpX"/>
    <property type="match status" value="1"/>
</dbReference>
<dbReference type="FunFam" id="1.10.8.60:FF:000002">
    <property type="entry name" value="ATP-dependent Clp protease ATP-binding subunit ClpX"/>
    <property type="match status" value="1"/>
</dbReference>
<dbReference type="FunFam" id="3.40.50.300:FF:000005">
    <property type="entry name" value="ATP-dependent Clp protease ATP-binding subunit ClpX"/>
    <property type="match status" value="1"/>
</dbReference>
<dbReference type="Gene3D" id="1.10.8.60">
    <property type="match status" value="1"/>
</dbReference>
<dbReference type="Gene3D" id="6.20.220.10">
    <property type="entry name" value="ClpX chaperone, C4-type zinc finger domain"/>
    <property type="match status" value="1"/>
</dbReference>
<dbReference type="Gene3D" id="3.40.50.300">
    <property type="entry name" value="P-loop containing nucleotide triphosphate hydrolases"/>
    <property type="match status" value="1"/>
</dbReference>
<dbReference type="HAMAP" id="MF_00175">
    <property type="entry name" value="ClpX"/>
    <property type="match status" value="1"/>
</dbReference>
<dbReference type="InterPro" id="IPR003593">
    <property type="entry name" value="AAA+_ATPase"/>
</dbReference>
<dbReference type="InterPro" id="IPR050052">
    <property type="entry name" value="ATP-dep_Clp_protease_ClpX"/>
</dbReference>
<dbReference type="InterPro" id="IPR003959">
    <property type="entry name" value="ATPase_AAA_core"/>
</dbReference>
<dbReference type="InterPro" id="IPR019489">
    <property type="entry name" value="Clp_ATPase_C"/>
</dbReference>
<dbReference type="InterPro" id="IPR004487">
    <property type="entry name" value="Clp_protease_ATP-bd_su_ClpX"/>
</dbReference>
<dbReference type="InterPro" id="IPR046425">
    <property type="entry name" value="ClpX_bact"/>
</dbReference>
<dbReference type="InterPro" id="IPR027417">
    <property type="entry name" value="P-loop_NTPase"/>
</dbReference>
<dbReference type="InterPro" id="IPR010603">
    <property type="entry name" value="Znf_CppX_C4"/>
</dbReference>
<dbReference type="InterPro" id="IPR038366">
    <property type="entry name" value="Znf_CppX_C4_sf"/>
</dbReference>
<dbReference type="NCBIfam" id="TIGR00382">
    <property type="entry name" value="clpX"/>
    <property type="match status" value="1"/>
</dbReference>
<dbReference type="NCBIfam" id="NF003745">
    <property type="entry name" value="PRK05342.1"/>
    <property type="match status" value="1"/>
</dbReference>
<dbReference type="PANTHER" id="PTHR48102:SF7">
    <property type="entry name" value="ATP-DEPENDENT CLP PROTEASE ATP-BINDING SUBUNIT CLPX-LIKE, MITOCHONDRIAL"/>
    <property type="match status" value="1"/>
</dbReference>
<dbReference type="PANTHER" id="PTHR48102">
    <property type="entry name" value="ATP-DEPENDENT CLP PROTEASE ATP-BINDING SUBUNIT CLPX-LIKE, MITOCHONDRIAL-RELATED"/>
    <property type="match status" value="1"/>
</dbReference>
<dbReference type="Pfam" id="PF07724">
    <property type="entry name" value="AAA_2"/>
    <property type="match status" value="1"/>
</dbReference>
<dbReference type="Pfam" id="PF10431">
    <property type="entry name" value="ClpB_D2-small"/>
    <property type="match status" value="1"/>
</dbReference>
<dbReference type="Pfam" id="PF06689">
    <property type="entry name" value="zf-C4_ClpX"/>
    <property type="match status" value="1"/>
</dbReference>
<dbReference type="SMART" id="SM00382">
    <property type="entry name" value="AAA"/>
    <property type="match status" value="1"/>
</dbReference>
<dbReference type="SMART" id="SM01086">
    <property type="entry name" value="ClpB_D2-small"/>
    <property type="match status" value="1"/>
</dbReference>
<dbReference type="SMART" id="SM00994">
    <property type="entry name" value="zf-C4_ClpX"/>
    <property type="match status" value="1"/>
</dbReference>
<dbReference type="SUPFAM" id="SSF57716">
    <property type="entry name" value="Glucocorticoid receptor-like (DNA-binding domain)"/>
    <property type="match status" value="1"/>
</dbReference>
<dbReference type="SUPFAM" id="SSF52540">
    <property type="entry name" value="P-loop containing nucleoside triphosphate hydrolases"/>
    <property type="match status" value="1"/>
</dbReference>
<dbReference type="PROSITE" id="PS51902">
    <property type="entry name" value="CLPX_ZB"/>
    <property type="match status" value="1"/>
</dbReference>
<feature type="chain" id="PRO_1000024669" description="ATP-dependent Clp protease ATP-binding subunit ClpX">
    <location>
        <begin position="1"/>
        <end position="424"/>
    </location>
</feature>
<feature type="domain" description="ClpX-type ZB" evidence="2">
    <location>
        <begin position="3"/>
        <end position="56"/>
    </location>
</feature>
<feature type="binding site" evidence="2">
    <location>
        <position position="15"/>
    </location>
    <ligand>
        <name>Zn(2+)</name>
        <dbReference type="ChEBI" id="CHEBI:29105"/>
    </ligand>
</feature>
<feature type="binding site" evidence="2">
    <location>
        <position position="18"/>
    </location>
    <ligand>
        <name>Zn(2+)</name>
        <dbReference type="ChEBI" id="CHEBI:29105"/>
    </ligand>
</feature>
<feature type="binding site" evidence="2">
    <location>
        <position position="37"/>
    </location>
    <ligand>
        <name>Zn(2+)</name>
        <dbReference type="ChEBI" id="CHEBI:29105"/>
    </ligand>
</feature>
<feature type="binding site" evidence="2">
    <location>
        <position position="40"/>
    </location>
    <ligand>
        <name>Zn(2+)</name>
        <dbReference type="ChEBI" id="CHEBI:29105"/>
    </ligand>
</feature>
<feature type="binding site" evidence="1">
    <location>
        <begin position="120"/>
        <end position="127"/>
    </location>
    <ligand>
        <name>ATP</name>
        <dbReference type="ChEBI" id="CHEBI:30616"/>
    </ligand>
</feature>
<reference key="1">
    <citation type="journal article" date="2010" name="J. Bacteriol.">
        <title>Genome sequence of the dioxin-mineralizing bacterium Sphingomonas wittichii RW1.</title>
        <authorList>
            <person name="Miller T.R."/>
            <person name="Delcher A.L."/>
            <person name="Salzberg S.L."/>
            <person name="Saunders E."/>
            <person name="Detter J.C."/>
            <person name="Halden R.U."/>
        </authorList>
    </citation>
    <scope>NUCLEOTIDE SEQUENCE [LARGE SCALE GENOMIC DNA]</scope>
    <source>
        <strain>DSM 6014 / CCUG 31198 / JCM 15750 / NBRC 105917 / EY 4224 / RW1</strain>
    </source>
</reference>
<accession>A5V3U4</accession>
<gene>
    <name evidence="1" type="primary">clpX</name>
    <name type="ordered locus">Swit_0592</name>
</gene>
<proteinExistence type="inferred from homology"/>
<evidence type="ECO:0000255" key="1">
    <source>
        <dbReference type="HAMAP-Rule" id="MF_00175"/>
    </source>
</evidence>
<evidence type="ECO:0000255" key="2">
    <source>
        <dbReference type="PROSITE-ProRule" id="PRU01250"/>
    </source>
</evidence>
<organism>
    <name type="scientific">Rhizorhabdus wittichii (strain DSM 6014 / CCUG 31198 / JCM 15750 / NBRC 105917 / EY 4224 / RW1)</name>
    <name type="common">Sphingomonas wittichii</name>
    <dbReference type="NCBI Taxonomy" id="392499"/>
    <lineage>
        <taxon>Bacteria</taxon>
        <taxon>Pseudomonadati</taxon>
        <taxon>Pseudomonadota</taxon>
        <taxon>Alphaproteobacteria</taxon>
        <taxon>Sphingomonadales</taxon>
        <taxon>Sphingomonadaceae</taxon>
        <taxon>Rhizorhabdus</taxon>
    </lineage>
</organism>